<dbReference type="EC" id="2.7.4.3" evidence="1"/>
<dbReference type="EMBL" id="AE004091">
    <property type="protein sequence ID" value="AAG07074.1"/>
    <property type="molecule type" value="Genomic_DNA"/>
</dbReference>
<dbReference type="PIR" id="G83184">
    <property type="entry name" value="G83184"/>
</dbReference>
<dbReference type="RefSeq" id="NP_252376.1">
    <property type="nucleotide sequence ID" value="NC_002516.2"/>
</dbReference>
<dbReference type="RefSeq" id="WP_003092485.1">
    <property type="nucleotide sequence ID" value="NZ_QZGE01000001.1"/>
</dbReference>
<dbReference type="SMR" id="Q9HXV4"/>
<dbReference type="FunCoup" id="Q9HXV4">
    <property type="interactions" value="775"/>
</dbReference>
<dbReference type="STRING" id="208964.PA3686"/>
<dbReference type="PaxDb" id="208964-PA3686"/>
<dbReference type="DNASU" id="879082"/>
<dbReference type="GeneID" id="879082"/>
<dbReference type="KEGG" id="pae:PA3686"/>
<dbReference type="PATRIC" id="fig|208964.12.peg.3855"/>
<dbReference type="PseudoCAP" id="PA3686"/>
<dbReference type="HOGENOM" id="CLU_032354_1_2_6"/>
<dbReference type="InParanoid" id="Q9HXV4"/>
<dbReference type="OrthoDB" id="9805030at2"/>
<dbReference type="PhylomeDB" id="Q9HXV4"/>
<dbReference type="BioCyc" id="PAER208964:G1FZ6-3756-MONOMER"/>
<dbReference type="UniPathway" id="UPA00588">
    <property type="reaction ID" value="UER00649"/>
</dbReference>
<dbReference type="Proteomes" id="UP000002438">
    <property type="component" value="Chromosome"/>
</dbReference>
<dbReference type="GO" id="GO:0005737">
    <property type="term" value="C:cytoplasm"/>
    <property type="evidence" value="ECO:0000318"/>
    <property type="project" value="GO_Central"/>
</dbReference>
<dbReference type="GO" id="GO:0005829">
    <property type="term" value="C:cytosol"/>
    <property type="evidence" value="ECO:0000318"/>
    <property type="project" value="GO_Central"/>
</dbReference>
<dbReference type="GO" id="GO:0004017">
    <property type="term" value="F:adenylate kinase activity"/>
    <property type="evidence" value="ECO:0000318"/>
    <property type="project" value="GO_Central"/>
</dbReference>
<dbReference type="GO" id="GO:0005524">
    <property type="term" value="F:ATP binding"/>
    <property type="evidence" value="ECO:0007669"/>
    <property type="project" value="UniProtKB-UniRule"/>
</dbReference>
<dbReference type="GO" id="GO:0004550">
    <property type="term" value="F:nucleoside diphosphate kinase activity"/>
    <property type="evidence" value="ECO:0000318"/>
    <property type="project" value="GO_Central"/>
</dbReference>
<dbReference type="GO" id="GO:0044209">
    <property type="term" value="P:AMP salvage"/>
    <property type="evidence" value="ECO:0007669"/>
    <property type="project" value="UniProtKB-UniRule"/>
</dbReference>
<dbReference type="GO" id="GO:0009132">
    <property type="term" value="P:nucleoside diphosphate metabolic process"/>
    <property type="evidence" value="ECO:0000318"/>
    <property type="project" value="GO_Central"/>
</dbReference>
<dbReference type="GO" id="GO:0009123">
    <property type="term" value="P:nucleoside monophosphate metabolic process"/>
    <property type="evidence" value="ECO:0000318"/>
    <property type="project" value="GO_Central"/>
</dbReference>
<dbReference type="CDD" id="cd01428">
    <property type="entry name" value="ADK"/>
    <property type="match status" value="1"/>
</dbReference>
<dbReference type="FunFam" id="3.40.50.300:FF:000106">
    <property type="entry name" value="Adenylate kinase mitochondrial"/>
    <property type="match status" value="1"/>
</dbReference>
<dbReference type="Gene3D" id="3.40.50.300">
    <property type="entry name" value="P-loop containing nucleotide triphosphate hydrolases"/>
    <property type="match status" value="1"/>
</dbReference>
<dbReference type="HAMAP" id="MF_00235">
    <property type="entry name" value="Adenylate_kinase_Adk"/>
    <property type="match status" value="1"/>
</dbReference>
<dbReference type="InterPro" id="IPR006259">
    <property type="entry name" value="Adenyl_kin_sub"/>
</dbReference>
<dbReference type="InterPro" id="IPR000850">
    <property type="entry name" value="Adenylat/UMP-CMP_kin"/>
</dbReference>
<dbReference type="InterPro" id="IPR033690">
    <property type="entry name" value="Adenylat_kinase_CS"/>
</dbReference>
<dbReference type="InterPro" id="IPR007862">
    <property type="entry name" value="Adenylate_kinase_lid-dom"/>
</dbReference>
<dbReference type="InterPro" id="IPR027417">
    <property type="entry name" value="P-loop_NTPase"/>
</dbReference>
<dbReference type="NCBIfam" id="TIGR01351">
    <property type="entry name" value="adk"/>
    <property type="match status" value="1"/>
</dbReference>
<dbReference type="NCBIfam" id="NF001379">
    <property type="entry name" value="PRK00279.1-1"/>
    <property type="match status" value="1"/>
</dbReference>
<dbReference type="NCBIfam" id="NF001380">
    <property type="entry name" value="PRK00279.1-2"/>
    <property type="match status" value="1"/>
</dbReference>
<dbReference type="NCBIfam" id="NF001381">
    <property type="entry name" value="PRK00279.1-3"/>
    <property type="match status" value="1"/>
</dbReference>
<dbReference type="NCBIfam" id="NF011100">
    <property type="entry name" value="PRK14527.1"/>
    <property type="match status" value="1"/>
</dbReference>
<dbReference type="PANTHER" id="PTHR23359">
    <property type="entry name" value="NUCLEOTIDE KINASE"/>
    <property type="match status" value="1"/>
</dbReference>
<dbReference type="Pfam" id="PF00406">
    <property type="entry name" value="ADK"/>
    <property type="match status" value="1"/>
</dbReference>
<dbReference type="Pfam" id="PF05191">
    <property type="entry name" value="ADK_lid"/>
    <property type="match status" value="1"/>
</dbReference>
<dbReference type="PRINTS" id="PR00094">
    <property type="entry name" value="ADENYLTKNASE"/>
</dbReference>
<dbReference type="SUPFAM" id="SSF52540">
    <property type="entry name" value="P-loop containing nucleoside triphosphate hydrolases"/>
    <property type="match status" value="1"/>
</dbReference>
<dbReference type="PROSITE" id="PS00113">
    <property type="entry name" value="ADENYLATE_KINASE"/>
    <property type="match status" value="1"/>
</dbReference>
<reference key="1">
    <citation type="journal article" date="2000" name="Nature">
        <title>Complete genome sequence of Pseudomonas aeruginosa PAO1, an opportunistic pathogen.</title>
        <authorList>
            <person name="Stover C.K."/>
            <person name="Pham X.-Q.T."/>
            <person name="Erwin A.L."/>
            <person name="Mizoguchi S.D."/>
            <person name="Warrener P."/>
            <person name="Hickey M.J."/>
            <person name="Brinkman F.S.L."/>
            <person name="Hufnagle W.O."/>
            <person name="Kowalik D.J."/>
            <person name="Lagrou M."/>
            <person name="Garber R.L."/>
            <person name="Goltry L."/>
            <person name="Tolentino E."/>
            <person name="Westbrock-Wadman S."/>
            <person name="Yuan Y."/>
            <person name="Brody L.L."/>
            <person name="Coulter S.N."/>
            <person name="Folger K.R."/>
            <person name="Kas A."/>
            <person name="Larbig K."/>
            <person name="Lim R.M."/>
            <person name="Smith K.A."/>
            <person name="Spencer D.H."/>
            <person name="Wong G.K.-S."/>
            <person name="Wu Z."/>
            <person name="Paulsen I.T."/>
            <person name="Reizer J."/>
            <person name="Saier M.H. Jr."/>
            <person name="Hancock R.E.W."/>
            <person name="Lory S."/>
            <person name="Olson M.V."/>
        </authorList>
    </citation>
    <scope>NUCLEOTIDE SEQUENCE [LARGE SCALE GENOMIC DNA]</scope>
    <source>
        <strain>ATCC 15692 / DSM 22644 / CIP 104116 / JCM 14847 / LMG 12228 / 1C / PRS 101 / PAO1</strain>
    </source>
</reference>
<name>KAD_PSEAE</name>
<feature type="chain" id="PRO_0000158830" description="Adenylate kinase">
    <location>
        <begin position="1"/>
        <end position="215"/>
    </location>
</feature>
<feature type="region of interest" description="NMP" evidence="1">
    <location>
        <begin position="30"/>
        <end position="59"/>
    </location>
</feature>
<feature type="region of interest" description="LID" evidence="1">
    <location>
        <begin position="122"/>
        <end position="159"/>
    </location>
</feature>
<feature type="binding site" evidence="1">
    <location>
        <begin position="10"/>
        <end position="15"/>
    </location>
    <ligand>
        <name>ATP</name>
        <dbReference type="ChEBI" id="CHEBI:30616"/>
    </ligand>
</feature>
<feature type="binding site" evidence="1">
    <location>
        <position position="31"/>
    </location>
    <ligand>
        <name>AMP</name>
        <dbReference type="ChEBI" id="CHEBI:456215"/>
    </ligand>
</feature>
<feature type="binding site" evidence="1">
    <location>
        <position position="36"/>
    </location>
    <ligand>
        <name>AMP</name>
        <dbReference type="ChEBI" id="CHEBI:456215"/>
    </ligand>
</feature>
<feature type="binding site" evidence="1">
    <location>
        <begin position="57"/>
        <end position="59"/>
    </location>
    <ligand>
        <name>AMP</name>
        <dbReference type="ChEBI" id="CHEBI:456215"/>
    </ligand>
</feature>
<feature type="binding site" evidence="1">
    <location>
        <begin position="85"/>
        <end position="88"/>
    </location>
    <ligand>
        <name>AMP</name>
        <dbReference type="ChEBI" id="CHEBI:456215"/>
    </ligand>
</feature>
<feature type="binding site" evidence="1">
    <location>
        <position position="92"/>
    </location>
    <ligand>
        <name>AMP</name>
        <dbReference type="ChEBI" id="CHEBI:456215"/>
    </ligand>
</feature>
<feature type="binding site" evidence="1">
    <location>
        <position position="123"/>
    </location>
    <ligand>
        <name>ATP</name>
        <dbReference type="ChEBI" id="CHEBI:30616"/>
    </ligand>
</feature>
<feature type="binding site" evidence="1">
    <location>
        <begin position="132"/>
        <end position="133"/>
    </location>
    <ligand>
        <name>ATP</name>
        <dbReference type="ChEBI" id="CHEBI:30616"/>
    </ligand>
</feature>
<feature type="binding site" evidence="1">
    <location>
        <position position="156"/>
    </location>
    <ligand>
        <name>AMP</name>
        <dbReference type="ChEBI" id="CHEBI:456215"/>
    </ligand>
</feature>
<feature type="binding site" evidence="1">
    <location>
        <position position="167"/>
    </location>
    <ligand>
        <name>AMP</name>
        <dbReference type="ChEBI" id="CHEBI:456215"/>
    </ligand>
</feature>
<feature type="binding site" evidence="1">
    <location>
        <position position="201"/>
    </location>
    <ligand>
        <name>ATP</name>
        <dbReference type="ChEBI" id="CHEBI:30616"/>
    </ligand>
</feature>
<gene>
    <name evidence="1" type="primary">adk</name>
    <name type="ordered locus">PA3686</name>
</gene>
<keyword id="KW-0067">ATP-binding</keyword>
<keyword id="KW-0963">Cytoplasm</keyword>
<keyword id="KW-0418">Kinase</keyword>
<keyword id="KW-0545">Nucleotide biosynthesis</keyword>
<keyword id="KW-0547">Nucleotide-binding</keyword>
<keyword id="KW-1185">Reference proteome</keyword>
<keyword id="KW-0808">Transferase</keyword>
<protein>
    <recommendedName>
        <fullName evidence="1">Adenylate kinase</fullName>
        <shortName evidence="1">AK</shortName>
        <ecNumber evidence="1">2.7.4.3</ecNumber>
    </recommendedName>
    <alternativeName>
        <fullName evidence="1">ATP-AMP transphosphorylase</fullName>
    </alternativeName>
    <alternativeName>
        <fullName evidence="1">ATP:AMP phosphotransferase</fullName>
    </alternativeName>
    <alternativeName>
        <fullName evidence="1">Adenylate monophosphate kinase</fullName>
    </alternativeName>
</protein>
<organism>
    <name type="scientific">Pseudomonas aeruginosa (strain ATCC 15692 / DSM 22644 / CIP 104116 / JCM 14847 / LMG 12228 / 1C / PRS 101 / PAO1)</name>
    <dbReference type="NCBI Taxonomy" id="208964"/>
    <lineage>
        <taxon>Bacteria</taxon>
        <taxon>Pseudomonadati</taxon>
        <taxon>Pseudomonadota</taxon>
        <taxon>Gammaproteobacteria</taxon>
        <taxon>Pseudomonadales</taxon>
        <taxon>Pseudomonadaceae</taxon>
        <taxon>Pseudomonas</taxon>
    </lineage>
</organism>
<sequence length="215" mass="23107">MRVILLGAPGAGKGTQARFITEKFGIPQISTGDMLRAAVKAGSPLGQQVKGVMDSGGLVSDDIIIALIKERITEADCAKGFLFDGFPRTIPQAEALKDAGVTIDHVVEIAVDDEEIVSRIAGRRVHPASGRVYHTEHNPPKVAGKDDVTGEELIQREDDKEETVRHRLSVYHSQTKPLVDFYQKLSAAEGTPKYHSIAGVGSVEQITAKVLSALS</sequence>
<proteinExistence type="inferred from homology"/>
<evidence type="ECO:0000255" key="1">
    <source>
        <dbReference type="HAMAP-Rule" id="MF_00235"/>
    </source>
</evidence>
<comment type="function">
    <text evidence="1">Catalyzes the reversible transfer of the terminal phosphate group between ATP and AMP. Plays an important role in cellular energy homeostasis and in adenine nucleotide metabolism.</text>
</comment>
<comment type="catalytic activity">
    <reaction evidence="1">
        <text>AMP + ATP = 2 ADP</text>
        <dbReference type="Rhea" id="RHEA:12973"/>
        <dbReference type="ChEBI" id="CHEBI:30616"/>
        <dbReference type="ChEBI" id="CHEBI:456215"/>
        <dbReference type="ChEBI" id="CHEBI:456216"/>
        <dbReference type="EC" id="2.7.4.3"/>
    </reaction>
</comment>
<comment type="pathway">
    <text evidence="1">Purine metabolism; AMP biosynthesis via salvage pathway; AMP from ADP: step 1/1.</text>
</comment>
<comment type="subunit">
    <text evidence="1">Monomer.</text>
</comment>
<comment type="subcellular location">
    <subcellularLocation>
        <location evidence="1">Cytoplasm</location>
    </subcellularLocation>
</comment>
<comment type="domain">
    <text evidence="1">Consists of three domains, a large central CORE domain and two small peripheral domains, NMPbind and LID, which undergo movements during catalysis. The LID domain closes over the site of phosphoryl transfer upon ATP binding. Assembling and dissambling the active center during each catalytic cycle provides an effective means to prevent ATP hydrolysis.</text>
</comment>
<comment type="similarity">
    <text evidence="1">Belongs to the adenylate kinase family.</text>
</comment>
<accession>Q9HXV4</accession>